<reference key="1">
    <citation type="journal article" date="2001" name="Plant Mol. Biol.">
        <title>The plastid chromosome of spinach (Spinacia oleracea): complete nucleotide sequence and gene organization.</title>
        <authorList>
            <person name="Schmitz-Linneweber C."/>
            <person name="Maier R.M."/>
            <person name="Alcaraz J.-P."/>
            <person name="Cottet A."/>
            <person name="Herrmann R.G."/>
            <person name="Mache R."/>
        </authorList>
    </citation>
    <scope>NUCLEOTIDE SEQUENCE [LARGE SCALE GENOMIC DNA]</scope>
    <source>
        <strain>cv. Geant d'hiver</strain>
        <strain>cv. Monatol</strain>
    </source>
</reference>
<comment type="function">
    <text evidence="1">Usually encoded in the trnK tRNA gene intron. Probably assists in splicing its own and other chloroplast group II introns.</text>
</comment>
<comment type="subcellular location">
    <subcellularLocation>
        <location>Plastid</location>
        <location>Chloroplast</location>
    </subcellularLocation>
</comment>
<comment type="similarity">
    <text evidence="1">Belongs to the intron maturase 2 family. MatK subfamily.</text>
</comment>
<dbReference type="EMBL" id="AJ400848">
    <property type="protein sequence ID" value="CAB88706.1"/>
    <property type="molecule type" value="Genomic_DNA"/>
</dbReference>
<dbReference type="RefSeq" id="NP_054913.1">
    <property type="nucleotide sequence ID" value="NC_002202.1"/>
</dbReference>
<dbReference type="STRING" id="3562.Q9M3N0"/>
<dbReference type="GeneID" id="3885560"/>
<dbReference type="KEGG" id="soe:3885560"/>
<dbReference type="InParanoid" id="Q9M3N0"/>
<dbReference type="OrthoDB" id="1886907at2759"/>
<dbReference type="Proteomes" id="UP001155700">
    <property type="component" value="Chloroplast Pltd"/>
</dbReference>
<dbReference type="GO" id="GO:0009507">
    <property type="term" value="C:chloroplast"/>
    <property type="evidence" value="ECO:0007669"/>
    <property type="project" value="UniProtKB-SubCell"/>
</dbReference>
<dbReference type="GO" id="GO:0003723">
    <property type="term" value="F:RNA binding"/>
    <property type="evidence" value="ECO:0007669"/>
    <property type="project" value="UniProtKB-KW"/>
</dbReference>
<dbReference type="GO" id="GO:0006397">
    <property type="term" value="P:mRNA processing"/>
    <property type="evidence" value="ECO:0007669"/>
    <property type="project" value="UniProtKB-KW"/>
</dbReference>
<dbReference type="GO" id="GO:0008380">
    <property type="term" value="P:RNA splicing"/>
    <property type="evidence" value="ECO:0007669"/>
    <property type="project" value="UniProtKB-UniRule"/>
</dbReference>
<dbReference type="GO" id="GO:0008033">
    <property type="term" value="P:tRNA processing"/>
    <property type="evidence" value="ECO:0007669"/>
    <property type="project" value="UniProtKB-KW"/>
</dbReference>
<dbReference type="HAMAP" id="MF_01390">
    <property type="entry name" value="MatK"/>
    <property type="match status" value="1"/>
</dbReference>
<dbReference type="InterPro" id="IPR024937">
    <property type="entry name" value="Domain_X"/>
</dbReference>
<dbReference type="InterPro" id="IPR002866">
    <property type="entry name" value="Maturase_MatK"/>
</dbReference>
<dbReference type="InterPro" id="IPR024942">
    <property type="entry name" value="Maturase_MatK_N"/>
</dbReference>
<dbReference type="PANTHER" id="PTHR34811">
    <property type="entry name" value="MATURASE K"/>
    <property type="match status" value="1"/>
</dbReference>
<dbReference type="PANTHER" id="PTHR34811:SF1">
    <property type="entry name" value="MATURASE K"/>
    <property type="match status" value="1"/>
</dbReference>
<dbReference type="Pfam" id="PF01348">
    <property type="entry name" value="Intron_maturas2"/>
    <property type="match status" value="1"/>
</dbReference>
<dbReference type="Pfam" id="PF01824">
    <property type="entry name" value="MatK_N"/>
    <property type="match status" value="1"/>
</dbReference>
<proteinExistence type="inferred from homology"/>
<gene>
    <name evidence="1" type="primary">matK</name>
    <name type="synonym">ycf14</name>
</gene>
<accession>Q9M3N0</accession>
<sequence>MEEFQRHIELDRSWQHNFLYPLIFQEYIYAFAYDHGLNKSILLENSGNSKYSLLLVKRLITRMYQQNHLILSANDSNQNVILGHKHKKNLYSQMITEGFAVIVEVPFSLLLISSLGEKEIVKSHNLRSIHSIFPFLEDKLLHLNYVLDILITYPAHLEILVQTLRYWVKDASSLHLLRFFLYEYRNLNSLITPKELISFLKKRNQRLFLFLYNLHVCEYESLFVFLCNQSSYLRPTSFGALIERIYFCGKLKYLVKVFTKDFGVILWIFREPFPHYVRYQGKSILASKGTSLLMHKWKYYLIYFGQCHFSVWSQPKRLYINRLSNHSLDFMGFLSRVRLNSSVIRSQMLKNSFLIENISKKFDTVVPIIPLVGSLAKAKFCNVLGHPISKSVWTDLSDSDILDRFGRICRNISHYYSGSSRKKSLYRIKYILRLSCARTLSRKHKSTVRAFLKRLGSEFLEEFFTEEEKALSLILPRDSSISRGLYRGRIWYLDIICIHNLANDE</sequence>
<name>MATK_SPIOL</name>
<feature type="chain" id="PRO_0000143717" description="Maturase K">
    <location>
        <begin position="1"/>
        <end position="505"/>
    </location>
</feature>
<keyword id="KW-0150">Chloroplast</keyword>
<keyword id="KW-0507">mRNA processing</keyword>
<keyword id="KW-0934">Plastid</keyword>
<keyword id="KW-1185">Reference proteome</keyword>
<keyword id="KW-0694">RNA-binding</keyword>
<keyword id="KW-0819">tRNA processing</keyword>
<evidence type="ECO:0000255" key="1">
    <source>
        <dbReference type="HAMAP-Rule" id="MF_01390"/>
    </source>
</evidence>
<protein>
    <recommendedName>
        <fullName evidence="1">Maturase K</fullName>
    </recommendedName>
    <alternativeName>
        <fullName evidence="1">Intron maturase</fullName>
    </alternativeName>
</protein>
<organism>
    <name type="scientific">Spinacia oleracea</name>
    <name type="common">Spinach</name>
    <dbReference type="NCBI Taxonomy" id="3562"/>
    <lineage>
        <taxon>Eukaryota</taxon>
        <taxon>Viridiplantae</taxon>
        <taxon>Streptophyta</taxon>
        <taxon>Embryophyta</taxon>
        <taxon>Tracheophyta</taxon>
        <taxon>Spermatophyta</taxon>
        <taxon>Magnoliopsida</taxon>
        <taxon>eudicotyledons</taxon>
        <taxon>Gunneridae</taxon>
        <taxon>Pentapetalae</taxon>
        <taxon>Caryophyllales</taxon>
        <taxon>Chenopodiaceae</taxon>
        <taxon>Chenopodioideae</taxon>
        <taxon>Anserineae</taxon>
        <taxon>Spinacia</taxon>
    </lineage>
</organism>
<geneLocation type="chloroplast"/>